<protein>
    <recommendedName>
        <fullName evidence="1">Chaperonin GroEL</fullName>
        <ecNumber evidence="1">5.6.1.7</ecNumber>
    </recommendedName>
    <alternativeName>
        <fullName evidence="1">60 kDa chaperonin</fullName>
    </alternativeName>
    <alternativeName>
        <fullName evidence="1">Chaperonin-60</fullName>
        <shortName evidence="1">Cpn60</shortName>
    </alternativeName>
</protein>
<gene>
    <name evidence="1" type="primary">groEL</name>
    <name evidence="1" type="synonym">groL</name>
    <name type="ordered locus">Dalk_4242</name>
</gene>
<organism>
    <name type="scientific">Desulfatibacillum aliphaticivorans</name>
    <dbReference type="NCBI Taxonomy" id="218208"/>
    <lineage>
        <taxon>Bacteria</taxon>
        <taxon>Pseudomonadati</taxon>
        <taxon>Thermodesulfobacteriota</taxon>
        <taxon>Desulfobacteria</taxon>
        <taxon>Desulfobacterales</taxon>
        <taxon>Desulfatibacillaceae</taxon>
        <taxon>Desulfatibacillum</taxon>
    </lineage>
</organism>
<proteinExistence type="inferred from homology"/>
<feature type="chain" id="PRO_1000147027" description="Chaperonin GroEL">
    <location>
        <begin position="1"/>
        <end position="548"/>
    </location>
</feature>
<feature type="binding site" evidence="1">
    <location>
        <begin position="29"/>
        <end position="32"/>
    </location>
    <ligand>
        <name>ATP</name>
        <dbReference type="ChEBI" id="CHEBI:30616"/>
    </ligand>
</feature>
<feature type="binding site" evidence="1">
    <location>
        <position position="50"/>
    </location>
    <ligand>
        <name>ATP</name>
        <dbReference type="ChEBI" id="CHEBI:30616"/>
    </ligand>
</feature>
<feature type="binding site" evidence="1">
    <location>
        <begin position="86"/>
        <end position="90"/>
    </location>
    <ligand>
        <name>ATP</name>
        <dbReference type="ChEBI" id="CHEBI:30616"/>
    </ligand>
</feature>
<feature type="binding site" evidence="1">
    <location>
        <position position="414"/>
    </location>
    <ligand>
        <name>ATP</name>
        <dbReference type="ChEBI" id="CHEBI:30616"/>
    </ligand>
</feature>
<feature type="binding site" evidence="1">
    <location>
        <position position="493"/>
    </location>
    <ligand>
        <name>ATP</name>
        <dbReference type="ChEBI" id="CHEBI:30616"/>
    </ligand>
</feature>
<evidence type="ECO:0000255" key="1">
    <source>
        <dbReference type="HAMAP-Rule" id="MF_00600"/>
    </source>
</evidence>
<accession>B8FM86</accession>
<comment type="function">
    <text evidence="1">Together with its co-chaperonin GroES, plays an essential role in assisting protein folding. The GroEL-GroES system forms a nano-cage that allows encapsulation of the non-native substrate proteins and provides a physical environment optimized to promote and accelerate protein folding.</text>
</comment>
<comment type="catalytic activity">
    <reaction evidence="1">
        <text>ATP + H2O + a folded polypeptide = ADP + phosphate + an unfolded polypeptide.</text>
        <dbReference type="EC" id="5.6.1.7"/>
    </reaction>
</comment>
<comment type="subunit">
    <text evidence="1">Forms a cylinder of 14 subunits composed of two heptameric rings stacked back-to-back. Interacts with the co-chaperonin GroES.</text>
</comment>
<comment type="subcellular location">
    <subcellularLocation>
        <location evidence="1">Cytoplasm</location>
    </subcellularLocation>
</comment>
<comment type="similarity">
    <text evidence="1">Belongs to the chaperonin (HSP60) family.</text>
</comment>
<dbReference type="EC" id="5.6.1.7" evidence="1"/>
<dbReference type="EMBL" id="CP001322">
    <property type="protein sequence ID" value="ACL05924.1"/>
    <property type="molecule type" value="Genomic_DNA"/>
</dbReference>
<dbReference type="RefSeq" id="WP_015948971.1">
    <property type="nucleotide sequence ID" value="NC_011768.1"/>
</dbReference>
<dbReference type="SMR" id="B8FM86"/>
<dbReference type="KEGG" id="dal:Dalk_4242"/>
<dbReference type="eggNOG" id="COG0459">
    <property type="taxonomic scope" value="Bacteria"/>
</dbReference>
<dbReference type="HOGENOM" id="CLU_016503_3_0_7"/>
<dbReference type="Proteomes" id="UP000000739">
    <property type="component" value="Chromosome"/>
</dbReference>
<dbReference type="GO" id="GO:0005737">
    <property type="term" value="C:cytoplasm"/>
    <property type="evidence" value="ECO:0007669"/>
    <property type="project" value="UniProtKB-SubCell"/>
</dbReference>
<dbReference type="GO" id="GO:0005524">
    <property type="term" value="F:ATP binding"/>
    <property type="evidence" value="ECO:0007669"/>
    <property type="project" value="UniProtKB-UniRule"/>
</dbReference>
<dbReference type="GO" id="GO:0140662">
    <property type="term" value="F:ATP-dependent protein folding chaperone"/>
    <property type="evidence" value="ECO:0007669"/>
    <property type="project" value="InterPro"/>
</dbReference>
<dbReference type="GO" id="GO:0016853">
    <property type="term" value="F:isomerase activity"/>
    <property type="evidence" value="ECO:0007669"/>
    <property type="project" value="UniProtKB-KW"/>
</dbReference>
<dbReference type="GO" id="GO:0051082">
    <property type="term" value="F:unfolded protein binding"/>
    <property type="evidence" value="ECO:0007669"/>
    <property type="project" value="UniProtKB-UniRule"/>
</dbReference>
<dbReference type="GO" id="GO:0042026">
    <property type="term" value="P:protein refolding"/>
    <property type="evidence" value="ECO:0007669"/>
    <property type="project" value="UniProtKB-UniRule"/>
</dbReference>
<dbReference type="CDD" id="cd03344">
    <property type="entry name" value="GroEL"/>
    <property type="match status" value="1"/>
</dbReference>
<dbReference type="FunFam" id="3.50.7.10:FF:000001">
    <property type="entry name" value="60 kDa chaperonin"/>
    <property type="match status" value="1"/>
</dbReference>
<dbReference type="Gene3D" id="3.50.7.10">
    <property type="entry name" value="GroEL"/>
    <property type="match status" value="1"/>
</dbReference>
<dbReference type="Gene3D" id="1.10.560.10">
    <property type="entry name" value="GroEL-like equatorial domain"/>
    <property type="match status" value="1"/>
</dbReference>
<dbReference type="Gene3D" id="3.30.260.10">
    <property type="entry name" value="TCP-1-like chaperonin intermediate domain"/>
    <property type="match status" value="1"/>
</dbReference>
<dbReference type="HAMAP" id="MF_00600">
    <property type="entry name" value="CH60"/>
    <property type="match status" value="1"/>
</dbReference>
<dbReference type="InterPro" id="IPR018370">
    <property type="entry name" value="Chaperonin_Cpn60_CS"/>
</dbReference>
<dbReference type="InterPro" id="IPR001844">
    <property type="entry name" value="Cpn60/GroEL"/>
</dbReference>
<dbReference type="InterPro" id="IPR002423">
    <property type="entry name" value="Cpn60/GroEL/TCP-1"/>
</dbReference>
<dbReference type="InterPro" id="IPR027409">
    <property type="entry name" value="GroEL-like_apical_dom_sf"/>
</dbReference>
<dbReference type="InterPro" id="IPR027413">
    <property type="entry name" value="GROEL-like_equatorial_sf"/>
</dbReference>
<dbReference type="InterPro" id="IPR027410">
    <property type="entry name" value="TCP-1-like_intermed_sf"/>
</dbReference>
<dbReference type="NCBIfam" id="TIGR02348">
    <property type="entry name" value="GroEL"/>
    <property type="match status" value="1"/>
</dbReference>
<dbReference type="NCBIfam" id="NF000592">
    <property type="entry name" value="PRK00013.1"/>
    <property type="match status" value="1"/>
</dbReference>
<dbReference type="NCBIfam" id="NF009487">
    <property type="entry name" value="PRK12849.1"/>
    <property type="match status" value="1"/>
</dbReference>
<dbReference type="NCBIfam" id="NF009488">
    <property type="entry name" value="PRK12850.1"/>
    <property type="match status" value="1"/>
</dbReference>
<dbReference type="NCBIfam" id="NF009489">
    <property type="entry name" value="PRK12851.1"/>
    <property type="match status" value="1"/>
</dbReference>
<dbReference type="PANTHER" id="PTHR45633">
    <property type="entry name" value="60 KDA HEAT SHOCK PROTEIN, MITOCHONDRIAL"/>
    <property type="match status" value="1"/>
</dbReference>
<dbReference type="Pfam" id="PF00118">
    <property type="entry name" value="Cpn60_TCP1"/>
    <property type="match status" value="1"/>
</dbReference>
<dbReference type="PRINTS" id="PR00298">
    <property type="entry name" value="CHAPERONIN60"/>
</dbReference>
<dbReference type="SUPFAM" id="SSF52029">
    <property type="entry name" value="GroEL apical domain-like"/>
    <property type="match status" value="1"/>
</dbReference>
<dbReference type="SUPFAM" id="SSF48592">
    <property type="entry name" value="GroEL equatorial domain-like"/>
    <property type="match status" value="1"/>
</dbReference>
<dbReference type="SUPFAM" id="SSF54849">
    <property type="entry name" value="GroEL-intermediate domain like"/>
    <property type="match status" value="1"/>
</dbReference>
<dbReference type="PROSITE" id="PS00296">
    <property type="entry name" value="CHAPERONINS_CPN60"/>
    <property type="match status" value="1"/>
</dbReference>
<keyword id="KW-0067">ATP-binding</keyword>
<keyword id="KW-0143">Chaperone</keyword>
<keyword id="KW-0963">Cytoplasm</keyword>
<keyword id="KW-0413">Isomerase</keyword>
<keyword id="KW-0547">Nucleotide-binding</keyword>
<keyword id="KW-1185">Reference proteome</keyword>
<sequence>MAKEIKYDMKARELMLAGVNALADAVAVTHGPKGRNVVIDKAWGAPTVTKDGVTVAKEIELENKFENMGAQMVKEVASKTSDTAGDGTTTATVLARAIYEEGMKLVVAGNNPMAIKRGIDKACEAAVKSLMNLSKPTKEQREIAQVGTISANTDETIGNIIAEAMNKVGKEGVITVEEAKSMDTTLDVVEGMQFDRGYISPYFVTDSEKMVCSLEDPYILIHEKKISNMKDLLPLLEQTAKMGKPLLIVAEDVEGEALATLVVNRLRGTLQIAAVKAPGFGDRRKAMLEDIAILTGGTVVSEDMGIKLENMSLADLGKCKRVSIDKDNTTIVDGAGARSALEGRVKQIRAQIDDTTSDYDREKLQERLAKLIGGVAVINVGAATEVEMKEKKARVEDALNATRAAVEEGIVPGGGVALVRAIDAVAKAKITGEQKIGARVVMRALEAPLRMIANNAGMEGSVVLDKVKNTEGSFGYNADTDTYEDLIEAGVIDPTKVVRLALQNACSIAGLMLTTEAMIADKPDENAGGMPAMPGGGMGGMGGMGGMM</sequence>
<name>CH60_DESAL</name>
<reference key="1">
    <citation type="journal article" date="2012" name="Environ. Microbiol.">
        <title>The genome sequence of Desulfatibacillum alkenivorans AK-01: a blueprint for anaerobic alkane oxidation.</title>
        <authorList>
            <person name="Callaghan A.V."/>
            <person name="Morris B.E."/>
            <person name="Pereira I.A."/>
            <person name="McInerney M.J."/>
            <person name="Austin R.N."/>
            <person name="Groves J.T."/>
            <person name="Kukor J.J."/>
            <person name="Suflita J.M."/>
            <person name="Young L.Y."/>
            <person name="Zylstra G.J."/>
            <person name="Wawrik B."/>
        </authorList>
    </citation>
    <scope>NUCLEOTIDE SEQUENCE [LARGE SCALE GENOMIC DNA]</scope>
    <source>
        <strain>AK-01</strain>
    </source>
</reference>